<sequence>MASIQNLYETVVGVLGDQASKVISALGEITVECLPEHYISVMTALRDHEELHFELLVDLCGVDYSTYKNEVWQGKRFAVVSQLLSVKNNQRIRVRVWVSDDDFPVVESVVPVYNSADWYEREAFDLYGIMFNNHPDLRRILTDYGFVGHPFRKDFPISGYVEMRYDEEQKRVIYQPVTIEPREITPRIVREENYGGQ</sequence>
<comment type="function">
    <text evidence="1">NDH-1 shuttles electrons from NADH, via FMN and iron-sulfur (Fe-S) centers, to quinones in the respiratory chain. The immediate electron acceptor for the enzyme in this species is believed to be ubiquinone. Couples the redox reaction to proton translocation (for every two electrons transferred, four hydrogen ions are translocated across the cytoplasmic membrane), and thus conserves the redox energy in a proton gradient.</text>
</comment>
<comment type="catalytic activity">
    <reaction evidence="1">
        <text>a quinone + NADH + 5 H(+)(in) = a quinol + NAD(+) + 4 H(+)(out)</text>
        <dbReference type="Rhea" id="RHEA:57888"/>
        <dbReference type="ChEBI" id="CHEBI:15378"/>
        <dbReference type="ChEBI" id="CHEBI:24646"/>
        <dbReference type="ChEBI" id="CHEBI:57540"/>
        <dbReference type="ChEBI" id="CHEBI:57945"/>
        <dbReference type="ChEBI" id="CHEBI:132124"/>
    </reaction>
</comment>
<comment type="subunit">
    <text evidence="1">NDH-1 is composed of 14 different subunits. Subunits NuoB, C, D, E, F, and G constitute the peripheral sector of the complex.</text>
</comment>
<comment type="subcellular location">
    <subcellularLocation>
        <location evidence="1">Cell inner membrane</location>
        <topology evidence="1">Peripheral membrane protein</topology>
        <orientation evidence="1">Cytoplasmic side</orientation>
    </subcellularLocation>
</comment>
<comment type="similarity">
    <text evidence="1">Belongs to the complex I 30 kDa subunit family.</text>
</comment>
<reference key="1">
    <citation type="journal article" date="2008" name="Genomics">
        <title>Characterization of ST-4821 complex, a unique Neisseria meningitidis clone.</title>
        <authorList>
            <person name="Peng J."/>
            <person name="Yang L."/>
            <person name="Yang F."/>
            <person name="Yang J."/>
            <person name="Yan Y."/>
            <person name="Nie H."/>
            <person name="Zhang X."/>
            <person name="Xiong Z."/>
            <person name="Jiang Y."/>
            <person name="Cheng F."/>
            <person name="Xu X."/>
            <person name="Chen S."/>
            <person name="Sun L."/>
            <person name="Li W."/>
            <person name="Shen Y."/>
            <person name="Shao Z."/>
            <person name="Liang X."/>
            <person name="Xu J."/>
            <person name="Jin Q."/>
        </authorList>
    </citation>
    <scope>NUCLEOTIDE SEQUENCE [LARGE SCALE GENOMIC DNA]</scope>
    <source>
        <strain>053442</strain>
    </source>
</reference>
<feature type="chain" id="PRO_0000358146" description="NADH-quinone oxidoreductase subunit C">
    <location>
        <begin position="1"/>
        <end position="197"/>
    </location>
</feature>
<keyword id="KW-0997">Cell inner membrane</keyword>
<keyword id="KW-1003">Cell membrane</keyword>
<keyword id="KW-0472">Membrane</keyword>
<keyword id="KW-0520">NAD</keyword>
<keyword id="KW-0874">Quinone</keyword>
<keyword id="KW-1278">Translocase</keyword>
<keyword id="KW-0813">Transport</keyword>
<keyword id="KW-0830">Ubiquinone</keyword>
<gene>
    <name evidence="1" type="primary">nuoC</name>
    <name type="ordered locus">NMCC_1903</name>
</gene>
<name>NUOC_NEIM0</name>
<protein>
    <recommendedName>
        <fullName evidence="1">NADH-quinone oxidoreductase subunit C</fullName>
        <ecNumber evidence="1">7.1.1.-</ecNumber>
    </recommendedName>
    <alternativeName>
        <fullName evidence="1">NADH dehydrogenase I subunit C</fullName>
    </alternativeName>
    <alternativeName>
        <fullName evidence="1">NDH-1 subunit C</fullName>
    </alternativeName>
</protein>
<evidence type="ECO:0000255" key="1">
    <source>
        <dbReference type="HAMAP-Rule" id="MF_01357"/>
    </source>
</evidence>
<proteinExistence type="inferred from homology"/>
<accession>A9M3E0</accession>
<dbReference type="EC" id="7.1.1.-" evidence="1"/>
<dbReference type="EMBL" id="CP000381">
    <property type="protein sequence ID" value="ABX74034.1"/>
    <property type="molecule type" value="Genomic_DNA"/>
</dbReference>
<dbReference type="RefSeq" id="WP_012222085.1">
    <property type="nucleotide sequence ID" value="NC_010120.1"/>
</dbReference>
<dbReference type="SMR" id="A9M3E0"/>
<dbReference type="KEGG" id="nmn:NMCC_1903"/>
<dbReference type="HOGENOM" id="CLU_042628_2_1_4"/>
<dbReference type="Proteomes" id="UP000001177">
    <property type="component" value="Chromosome"/>
</dbReference>
<dbReference type="GO" id="GO:0005886">
    <property type="term" value="C:plasma membrane"/>
    <property type="evidence" value="ECO:0007669"/>
    <property type="project" value="UniProtKB-SubCell"/>
</dbReference>
<dbReference type="GO" id="GO:0008137">
    <property type="term" value="F:NADH dehydrogenase (ubiquinone) activity"/>
    <property type="evidence" value="ECO:0007669"/>
    <property type="project" value="InterPro"/>
</dbReference>
<dbReference type="GO" id="GO:0050136">
    <property type="term" value="F:NADH:ubiquinone reductase (non-electrogenic) activity"/>
    <property type="evidence" value="ECO:0007669"/>
    <property type="project" value="UniProtKB-UniRule"/>
</dbReference>
<dbReference type="GO" id="GO:0048038">
    <property type="term" value="F:quinone binding"/>
    <property type="evidence" value="ECO:0007669"/>
    <property type="project" value="UniProtKB-KW"/>
</dbReference>
<dbReference type="Gene3D" id="3.30.460.80">
    <property type="entry name" value="NADH:ubiquinone oxidoreductase, 30kDa subunit"/>
    <property type="match status" value="1"/>
</dbReference>
<dbReference type="HAMAP" id="MF_01357">
    <property type="entry name" value="NDH1_NuoC"/>
    <property type="match status" value="1"/>
</dbReference>
<dbReference type="InterPro" id="IPR010218">
    <property type="entry name" value="NADH_DH_suC"/>
</dbReference>
<dbReference type="InterPro" id="IPR037232">
    <property type="entry name" value="NADH_quin_OxRdtase_su_C/D-like"/>
</dbReference>
<dbReference type="InterPro" id="IPR001268">
    <property type="entry name" value="NADH_UbQ_OxRdtase_30kDa_su"/>
</dbReference>
<dbReference type="InterPro" id="IPR020396">
    <property type="entry name" value="NADH_UbQ_OxRdtase_CS"/>
</dbReference>
<dbReference type="NCBIfam" id="TIGR01961">
    <property type="entry name" value="NuoC_fam"/>
    <property type="match status" value="1"/>
</dbReference>
<dbReference type="NCBIfam" id="NF004730">
    <property type="entry name" value="PRK06074.1-1"/>
    <property type="match status" value="1"/>
</dbReference>
<dbReference type="PANTHER" id="PTHR10884:SF14">
    <property type="entry name" value="NADH DEHYDROGENASE [UBIQUINONE] IRON-SULFUR PROTEIN 3, MITOCHONDRIAL"/>
    <property type="match status" value="1"/>
</dbReference>
<dbReference type="PANTHER" id="PTHR10884">
    <property type="entry name" value="NADH DEHYDROGENASE UBIQUINONE IRON-SULFUR PROTEIN 3"/>
    <property type="match status" value="1"/>
</dbReference>
<dbReference type="Pfam" id="PF00329">
    <property type="entry name" value="Complex1_30kDa"/>
    <property type="match status" value="1"/>
</dbReference>
<dbReference type="SUPFAM" id="SSF143243">
    <property type="entry name" value="Nqo5-like"/>
    <property type="match status" value="1"/>
</dbReference>
<dbReference type="PROSITE" id="PS00542">
    <property type="entry name" value="COMPLEX1_30K"/>
    <property type="match status" value="1"/>
</dbReference>
<organism>
    <name type="scientific">Neisseria meningitidis serogroup C (strain 053442)</name>
    <dbReference type="NCBI Taxonomy" id="374833"/>
    <lineage>
        <taxon>Bacteria</taxon>
        <taxon>Pseudomonadati</taxon>
        <taxon>Pseudomonadota</taxon>
        <taxon>Betaproteobacteria</taxon>
        <taxon>Neisseriales</taxon>
        <taxon>Neisseriaceae</taxon>
        <taxon>Neisseria</taxon>
    </lineage>
</organism>